<gene>
    <name type="primary">Tax</name>
</gene>
<accession>P03409</accession>
<comment type="function">
    <text evidence="7 13 16 19 20 21 22 23 24 26 27">Transcriptional activator that governs the viral transcription from the 5'LTR via the recruitment of dimers of host phosphorylated CREB1. Together they bind cAMP response elements within the viral promoter and mediate high-level viral transcription (PubMed:22789739, PubMed:8970957). Increases host CREB1 O-GlcNAcylation to further increase 5'LTR transactivation (PubMed:28742148). Modulates also the expression of cellular genes leading to the deregulation of T-cell proliferation, perturbing the integrity of cell cycle checkpoints, the DNA damage response and apopototic pathways. Acts as an ubiquitin E3 ligase and stimulates host IKK complex by catalyzing the assembly of free mixed-linkage polyubiquitin chains, resulting in constitutive activation of the transcription factor NF-kappa-B (PubMed:27082114, PubMed:28103322). Inhibits the host nonsense-mediated mRNA decay (NMD), a cellular process that can actively degrade mRNAs by interacting with host UPF1 (PubMed:27082114).</text>
</comment>
<comment type="subunit">
    <text evidence="3 4 5 6 9 10 11 13 14 15 16 18 19 24 27 28 29">Homodimer. Interacts with host CREB1 (PubMed:8970957). Interacts with host DLG1, IKBKG, KDM4A, MAGII3 and TAX1BP1. Recruits the coactivators CREBBP, EP300 and PCAF (PubMed:10766811). Interaction with human CARM1 enhances Tax transactivation and promotes methylation of histone H3 (PubMed:17005681). Interacts with host SUV39H1 protein, leading to abrogate Tax transactivation of HTLV-1 LTR (PubMed:16409643). Interaction with human CREB coactivators, CRTC1/TORC1, CRTC2/TORC2 and CRTC3/TORC3 enhances Tax transactivation (PubMed:15466468, PubMed:16809310). Interacts with host UPF1; this interaction inhibits the host nonsense-mediated mRNA decay (NMD). Interacts (via N-terminus) with host PLSCR1; this interaction negatively regulates Tax transactivation activity by altering its subcellular distribution and homodimerization (PubMed:22789739).</text>
</comment>
<comment type="interaction">
    <interactant intactId="EBI-5236464">
        <id>P03409</id>
    </interactant>
    <interactant intactId="EBI-301697">
        <id>Q9UBN7</id>
        <label>HDAC6</label>
    </interactant>
    <organismsDiffer>true</organismsDiffer>
    <experiments>4</experiments>
</comment>
<comment type="interaction">
    <interactant intactId="EBI-5236464">
        <id>P03409</id>
    </interactant>
    <interactant intactId="EBI-81266">
        <id>O14920</id>
        <label>IKBKB</label>
    </interactant>
    <organismsDiffer>true</organismsDiffer>
    <experiments>3</experiments>
</comment>
<comment type="subcellular location">
    <subcellularLocation>
        <location evidence="12 19">Host nucleus</location>
    </subcellularLocation>
    <subcellularLocation>
        <location evidence="12 19 25">Host cytoplasm</location>
    </subcellularLocation>
    <text>Shuttles from the host nucleus to the cytoplasm. Found predominantly in the nucleus, where it is equally distributed between the nucleoplasm and the nuclear matrix.</text>
</comment>
<comment type="induction">
    <text>Down-regulated by P30II.</text>
</comment>
<comment type="domain">
    <text>The 48 N-terminal residues contain a non-canonical functional nuclear localization signal (NLS).</text>
</comment>
<comment type="domain">
    <text>The PDZ-binding domain mediates binding to human DLG1 and MAGI3. Interaction with other PDZ domain-containing protein induces IL2-independent growth.</text>
</comment>
<comment type="PTM">
    <text evidence="17 30">Phosphorylation at Thr-48 results in the loss of NF-kappa-B activation function. Phosphorylation at Thr-215 results in loss of CREB and NF-B responsive promoters activation. Phosphorylation at Thr-184 and Ser-336 have no effect on these Tax functions. Phosphorylation of either Ser-300 or Ser-301 is necessary for localization to nuclear bodies. Thr-48, Thr-184, Thr-215 and Ser-336 are highly phosphorylated, whereas Ser-300 or Ser-301 are only rarely phosphorylated.</text>
</comment>
<comment type="PTM">
    <text evidence="25">Modified by host ubiquitin related modifier 1/URM1, resulting in a redistribution of Tax to the cytoplasm.</text>
</comment>
<comment type="miscellaneous">
    <text>HTLV-1 lineages are divided in four clades, A (Cosmopolitan), B (Central African group), C (Melanesian group) and D (New Central African group).</text>
</comment>
<comment type="similarity">
    <text evidence="31">Belongs to the deltaretrovirus Tax protein family.</text>
</comment>
<organismHost>
    <name type="scientific">Homo sapiens</name>
    <name type="common">Human</name>
    <dbReference type="NCBI Taxonomy" id="9606"/>
</organismHost>
<feature type="chain" id="PRO_0000085494" description="Protein Tax-1">
    <location>
        <begin position="1"/>
        <end position="353"/>
    </location>
</feature>
<feature type="zinc finger region" evidence="1">
    <location>
        <begin position="23"/>
        <end position="49"/>
    </location>
</feature>
<feature type="region of interest" description="Interaction with CREB1">
    <location>
        <begin position="2"/>
        <end position="58"/>
    </location>
</feature>
<feature type="region of interest" description="Interaction with CREBBP/P300">
    <location>
        <begin position="81"/>
        <end position="95"/>
    </location>
</feature>
<feature type="region of interest" description="Interaction with IKBKG">
    <location>
        <begin position="106"/>
        <end position="111"/>
    </location>
</feature>
<feature type="region of interest" description="Homodimerization">
    <location>
        <begin position="116"/>
        <end position="145"/>
    </location>
</feature>
<feature type="region of interest" description="Homodimerization">
    <location>
        <begin position="213"/>
        <end position="248"/>
    </location>
</feature>
<feature type="region of interest" description="Transactivation">
    <location>
        <begin position="289"/>
        <end position="322"/>
    </location>
</feature>
<feature type="region of interest" description="Interaction with CREBBP C-terminus">
    <location>
        <begin position="312"/>
        <end position="319"/>
    </location>
</feature>
<feature type="region of interest" description="Disordered" evidence="2">
    <location>
        <begin position="326"/>
        <end position="353"/>
    </location>
</feature>
<feature type="short sequence motif" description="SH3-binding" evidence="1">
    <location>
        <begin position="73"/>
        <end position="80"/>
    </location>
</feature>
<feature type="short sequence motif" description="Nuclear export signal">
    <location>
        <begin position="188"/>
        <end position="202"/>
    </location>
</feature>
<feature type="short sequence motif" description="PDZ-binding">
    <location>
        <begin position="350"/>
        <end position="353"/>
    </location>
</feature>
<feature type="compositionally biased region" description="Basic and acidic residues" evidence="2">
    <location>
        <begin position="343"/>
        <end position="353"/>
    </location>
</feature>
<feature type="modified residue" description="Phosphothreonine; by host" evidence="17">
    <location>
        <position position="48"/>
    </location>
</feature>
<feature type="modified residue" description="Phosphothreonine; by host" evidence="17">
    <location>
        <position position="184"/>
    </location>
</feature>
<feature type="modified residue" description="Phosphothreonine; by host" evidence="17">
    <location>
        <position position="215"/>
    </location>
</feature>
<feature type="modified residue" description="Phosphoserine; by host" evidence="30">
    <location>
        <position position="300"/>
    </location>
</feature>
<feature type="modified residue" description="Phosphoserine; by host" evidence="30">
    <location>
        <position position="301"/>
    </location>
</feature>
<feature type="modified residue" description="Phosphoserine; by host" evidence="17">
    <location>
        <position position="336"/>
    </location>
</feature>
<feature type="mutagenesis site" description="30% loss of CREB activation. 70% loss of NF-kappa-B activation." evidence="17">
    <original>T</original>
    <variation>A</variation>
    <location>
        <position position="48"/>
    </location>
</feature>
<feature type="mutagenesis site" description="50% loss of CREB activation. Almost complete loss of NF-kappa-B activation." evidence="17">
    <original>T</original>
    <variation>D</variation>
    <location>
        <position position="48"/>
    </location>
</feature>
<feature type="mutagenesis site" description="Slightly reduced CREB and NF-kappa-B activation." evidence="17">
    <original>T</original>
    <variation>A</variation>
    <location>
        <position position="184"/>
    </location>
</feature>
<feature type="mutagenesis site" description="Slightly reduced CREB and NF-kappa-B activation." evidence="17">
    <original>T</original>
    <variation>D</variation>
    <location>
        <position position="184"/>
    </location>
</feature>
<feature type="mutagenesis site" description="Complete loss of Tax-1 nuclear export." evidence="8">
    <original>L</original>
    <variation>A</variation>
    <location>
        <position position="200"/>
    </location>
</feature>
<feature type="mutagenesis site" description="30% loss of CREB activation. Slightly reduced NF-kappa-B activation." evidence="17">
    <original>T</original>
    <variation>A</variation>
    <location>
        <position position="215"/>
    </location>
</feature>
<feature type="mutagenesis site" description="Almost complete loss of CREB and NF-kappa-B activation." evidence="17">
    <original>T</original>
    <variation>D</variation>
    <location>
        <position position="215"/>
    </location>
</feature>
<feature type="mutagenesis site" description="Almost complete loss of CREB and NF-kappa-B activation." evidence="17">
    <original>SS</original>
    <variation>AA</variation>
    <location>
        <begin position="300"/>
        <end position="301"/>
    </location>
</feature>
<feature type="mutagenesis site" description="30% loss of CREB activation. 80% loss of NF-kappa-B activation." evidence="17">
    <original>SS</original>
    <variation>DD</variation>
    <location>
        <begin position="300"/>
        <end position="301"/>
    </location>
</feature>
<feature type="mutagenesis site" description="Slightly reduced CREB and NF-kappa-B activation." evidence="17">
    <original>S</original>
    <variation>A</variation>
    <location>
        <position position="336"/>
    </location>
</feature>
<feature type="mutagenesis site" description="Slightly reduced CREB and NF-kappa-B activation." evidence="17">
    <original>S</original>
    <variation>D</variation>
    <location>
        <position position="336"/>
    </location>
</feature>
<feature type="strand" evidence="32">
    <location>
        <begin position="351"/>
        <end position="353"/>
    </location>
</feature>
<proteinExistence type="evidence at protein level"/>
<reference key="1">
    <citation type="journal article" date="1983" name="Proc. Natl. Acad. Sci. U.S.A.">
        <title>Human adult T-cell leukemia virus: complete nucleotide sequence of the provirus genome integrated in leukemia cell DNA.</title>
        <authorList>
            <person name="Seiki M."/>
            <person name="Hattori S."/>
            <person name="Hirayama Y."/>
            <person name="Yoshida M.C."/>
        </authorList>
    </citation>
    <scope>NUCLEOTIDE SEQUENCE [GENOMIC DNA]</scope>
</reference>
<reference key="2">
    <citation type="journal article" date="1985" name="Science">
        <title>The x gene is essential for HTLV replication.</title>
        <authorList>
            <person name="Chen I.S.Y."/>
            <person name="Slamon D.J."/>
            <person name="Rosenblatt J.D."/>
            <person name="Shah N.P."/>
            <person name="Quan S.G."/>
            <person name="Wachsman W."/>
        </authorList>
    </citation>
    <scope>FUNCTION</scope>
</reference>
<reference key="3">
    <citation type="journal article" date="1989" name="J. Biol. Chem.">
        <title>HTLV-I tax gene product activates transcription via pre-existing cellular factors and cAMP responsive element.</title>
        <authorList>
            <person name="Giam C.-Z."/>
            <person name="Xu Y.L."/>
        </authorList>
    </citation>
    <scope>FUNCTION</scope>
</reference>
<reference key="4">
    <citation type="journal article" date="1992" name="Virology">
        <title>HTLV-I Tax is a zinc-binding protein: role of zinc in Tax structure and function.</title>
        <authorList>
            <person name="Semmes O.J."/>
            <person name="Jeang K.T."/>
        </authorList>
    </citation>
    <scope>DOMAIN ZINC-FINGER</scope>
</reference>
<reference key="5">
    <citation type="journal article" date="1992" name="Proc. Natl. Acad. Sci. U.S.A.">
        <title>Human T-cell lymphotropic virus type I (HTLV-I) transcriptional activator, Tax, enhances CREB binding to HTLV-I 21-base-pair repeats by protein-protein interaction.</title>
        <authorList>
            <person name="Zhao L.J."/>
            <person name="Giam C.-Z."/>
        </authorList>
    </citation>
    <scope>INTERACTION WITH RAT CREB1</scope>
</reference>
<reference key="6">
    <citation type="journal article" date="1996" name="J. Virol.">
        <title>Interaction of the human T-lymphotropic virus type 1 Tax dimer with CREB and the viral 21-base-pair repeat.</title>
        <authorList>
            <person name="Tie F."/>
            <person name="Adya N."/>
            <person name="Greene W.C."/>
            <person name="Giam C.Z."/>
        </authorList>
    </citation>
    <scope>FUNCTION</scope>
    <scope>INTERACTION WITH HOST CREB1</scope>
</reference>
<reference key="7">
    <citation type="journal article" date="1997" name="Nucleic Acids Res.">
        <title>HTLV-I Tax self-association in optimal trans-activation function.</title>
        <authorList>
            <person name="Jin D.Y."/>
            <person name="Jeang K.T."/>
        </authorList>
    </citation>
    <scope>SUBUNIT</scope>
</reference>
<reference key="8">
    <citation type="journal article" date="1998" name="Oncogene">
        <title>The C-terminus of the HTLV-1 Tax oncoprotein mediates interaction with the PDZ domain of cellular proteins.</title>
        <authorList>
            <person name="Rousset R."/>
            <person name="Fabre S."/>
            <person name="Desbois C."/>
            <person name="Bantignies F."/>
            <person name="Jalinot P."/>
        </authorList>
    </citation>
    <scope>DOMAIN PDZ-BINDING</scope>
</reference>
<reference key="9">
    <citation type="journal article" date="1998" name="Mol. Cell. Biol.">
        <title>Differential transcriptional activation by human T-cell leukemia virus type 1 Tax mutants is mediated by distinct interactions with CREB binding protein and p300.</title>
        <authorList>
            <person name="Bex F."/>
            <person name="Yin M.-J."/>
            <person name="Burny A."/>
            <person name="Gaynor R.B."/>
        </authorList>
    </citation>
    <scope>INTERACTION WITH HOST CREBBP AND EP300</scope>
</reference>
<reference key="10">
    <citation type="journal article" date="1998" name="Mol. Cell. Biol.">
        <title>Human T-cell leukemia virus type 1 Tax requires direct access to DNA for recruitment of CREB binding protein to the viral promoter.</title>
        <authorList>
            <person name="Lenzmeier B.A."/>
            <person name="Giebler H.A."/>
            <person name="Nyborg J.K."/>
        </authorList>
    </citation>
    <scope>DNA-BINDING</scope>
</reference>
<reference key="11">
    <citation type="journal article" date="1999" name="J. Virol.">
        <title>Phosphorylation of the human T-cell leukemia virus type 1 transactivator tax on adjacent serine residues is critical for tax activation.</title>
        <authorList>
            <person name="Bex F."/>
            <person name="Murphy K."/>
            <person name="Wattiez R."/>
            <person name="Burny A."/>
            <person name="Gaynor R.B."/>
        </authorList>
    </citation>
    <scope>PHOSPHORYLATION AT SER-300 AND SER-301</scope>
</reference>
<reference key="12">
    <citation type="journal article" date="1999" name="Oncogene">
        <title>Tax oncoprotein of HTLV-1 binds to the human homologue of Drosophila discs large tumor suppressor protein, hDLG, and perturbs its function in cell growth control.</title>
        <authorList>
            <person name="Suzuki T."/>
            <person name="Ohsugi Y."/>
            <person name="Uchida-Toita M."/>
            <person name="Akiyama T."/>
            <person name="Yoshida M."/>
        </authorList>
    </citation>
    <scope>INTERACTION WITH HUMAN DLG1</scope>
</reference>
<reference key="13">
    <citation type="journal article" date="2000" name="J. Biol. Chem.">
        <title>p300 and p300/cAMP-responsive element-binding protein associated factor interact with human T-cell lymphotropic virus type-1 Tax in a multi-histone acetyltransferase/activator-enhancer complex.</title>
        <authorList>
            <person name="Harrod R."/>
            <person name="Kuo Y.-L."/>
            <person name="Tang Y."/>
            <person name="Yao Y."/>
            <person name="Vassilev A."/>
            <person name="Nakatani Y."/>
            <person name="Giam C.-Z."/>
        </authorList>
    </citation>
    <scope>INTERACTION WITH HUMAN PCAF</scope>
</reference>
<reference key="14">
    <citation type="journal article" date="2000" name="Oncogene">
        <title>Activation of IKKalpha and IKKbeta through their fusion with HTLV-I tax protein.</title>
        <authorList>
            <person name="Xiao G."/>
            <person name="Sun S.C."/>
        </authorList>
    </citation>
    <scope>INTERACTION WITH HUMAN IKBKG</scope>
</reference>
<reference key="15">
    <citation type="journal article" date="2001" name="Mol. Cell. Biol.">
        <title>The oncoprotein Tax binds the SRC-1-interacting domain of CBP/p300 to mediate transcriptional activation.</title>
        <authorList>
            <person name="Scoggin K.E.S."/>
            <person name="Ulloa A."/>
            <person name="Nyborg J.K."/>
        </authorList>
    </citation>
    <scope>INTERACTION WITH HOST CREBBP AND EP300</scope>
</reference>
<reference key="16">
    <citation type="journal article" date="2002" name="Mol. Cell. Biol.">
        <title>Acetylation of nucleosomal histones by p300 facilitates transcription from tax-responsive human T-cell leukemia virus type 1 chromatin template.</title>
        <authorList>
            <person name="Lu H."/>
            <person name="Pise-Masison C.A."/>
            <person name="Fletcher T.M."/>
            <person name="Schiltz R.L."/>
            <person name="Nagaich A.K."/>
            <person name="Radonovich M."/>
            <person name="Hager G."/>
            <person name="Cole P.A."/>
            <person name="Brady J.N."/>
        </authorList>
    </citation>
    <scope>FUNCTION</scope>
</reference>
<reference key="17">
    <citation type="journal article" date="2003" name="J. Biol. Chem.">
        <title>Characterization of a nuclear export signal within the human T cell leukemia virus type I transactivator protein Tax.</title>
        <authorList>
            <person name="Alefantis T."/>
            <person name="Barmak K."/>
            <person name="Harhaj E.W."/>
            <person name="Grant C."/>
            <person name="Wigdahl B."/>
        </authorList>
    </citation>
    <scope>NUCLEAR EXPORT SIGNAL</scope>
    <scope>MUTAGENESIS OF LEU-200</scope>
</reference>
<reference key="18">
    <citation type="journal article" date="2004" name="J. Biol. Chem.">
        <title>Protein profile of tax-associated complexes.</title>
        <authorList>
            <person name="Wu K."/>
            <person name="Bottazzi M.E."/>
            <person name="de la Fuente C."/>
            <person name="Deng L."/>
            <person name="Gitlin S.D."/>
            <person name="Maddukuri A."/>
            <person name="Dadgar S."/>
            <person name="Li H."/>
            <person name="Vertes A."/>
            <person name="Pumfery A."/>
            <person name="Kashanchi F."/>
        </authorList>
    </citation>
    <scope>INTERACTION WITH HUMAN TAX1BP1</scope>
</reference>
<reference key="19">
    <citation type="journal article" date="2004" name="J. Biol. Chem.">
        <title>A 10-amino acid domain within human T-cell leukemia virus type 1 and type 2 tax protein sequences is responsible for their divergent subcellular distribution.</title>
        <authorList>
            <person name="Meertens L."/>
            <person name="Chevalier S."/>
            <person name="Weil R."/>
            <person name="Gessain A."/>
            <person name="Mahieux R."/>
        </authorList>
    </citation>
    <scope>SUBCELLULAR LOCATION</scope>
</reference>
<reference key="20">
    <citation type="journal article" date="2004" name="J. Biol. Chem.">
        <title>Enhanced activation of tax-dependent transcription of human T-cell leukemia virus type I (HTLV-I) long terminal repeat by TORC3.</title>
        <authorList>
            <person name="Koga H."/>
            <person name="Ohshima T."/>
            <person name="Shimotohno K."/>
        </authorList>
    </citation>
    <scope>INTERACTION WITH HUMAN CRTC3</scope>
    <scope>FUNCTION</scope>
</reference>
<reference key="21">
    <citation type="journal article" date="2004" name="Nat. Med.">
        <title>HTLV-1-encoded p30II is a post-transcriptional negative regulator of viral replication.</title>
        <authorList>
            <person name="Nicot C."/>
            <person name="Dundr M."/>
            <person name="Johnson J.M."/>
            <person name="Fullen J.R."/>
            <person name="Alonzo N."/>
            <person name="Fukumoto R."/>
            <person name="Princler G.L."/>
            <person name="Derse D."/>
            <person name="Misteli T."/>
            <person name="Franchini G."/>
        </authorList>
    </citation>
    <scope>DOWN-REGULATION BY P30II</scope>
</reference>
<reference key="22">
    <citation type="journal article" date="2004" name="Virology">
        <title>Human T-cell leukemia virus type 1 Tax oncoprotein induces and interacts with a multi-PDZ domain protein, MAGI-3.</title>
        <authorList>
            <person name="Ohashi M."/>
            <person name="Sakurai M."/>
            <person name="Higuchi M."/>
            <person name="Mori N."/>
            <person name="Fukushi M."/>
            <person name="Oie M."/>
            <person name="Coffey R.J."/>
            <person name="Yoshiura K."/>
            <person name="Tanaka Y."/>
            <person name="Uchiyama M."/>
            <person name="Hatanaka M."/>
            <person name="Fujii M."/>
        </authorList>
    </citation>
    <scope>INTERACTION WITH HUMAN MAGI3</scope>
</reference>
<reference key="23">
    <citation type="journal article" date="2005" name="J. Biol. Chem.">
        <title>Functional characterization of JMJD2A, a histone deacetylase- and retinoblastoma-binding protein.</title>
        <authorList>
            <person name="Gray S.G."/>
            <person name="Iglesias A.H."/>
            <person name="Lizcano F."/>
            <person name="Villanueva R."/>
            <person name="Camelo S."/>
            <person name="Jingu H."/>
            <person name="Teh B.T."/>
            <person name="Koibuchi N."/>
            <person name="Chin W.W."/>
            <person name="Kokkotou E."/>
            <person name="Dangond F."/>
        </authorList>
    </citation>
    <scope>INTERACTION WITH HUMAN KDM4A</scope>
</reference>
<reference key="24">
    <citation type="journal article" date="2005" name="Oncogene">
        <title>Molecular mechanisms of cellular transformation by HTLV-1 Tax.</title>
        <authorList>
            <person name="Grassmann R."/>
            <person name="Aboud M."/>
            <person name="Jeang K.T."/>
        </authorList>
    </citation>
    <scope>REVIEW</scope>
</reference>
<reference key="25">
    <citation type="journal article" date="2005" name="Oncogene">
        <title>Transcriptional and post-transcriptional gene regulation of HTLV-1.</title>
        <authorList>
            <person name="Kashanchi F."/>
            <person name="Brady J.N."/>
        </authorList>
    </citation>
    <scope>REVIEW</scope>
</reference>
<reference key="26">
    <citation type="journal article" date="2005" name="Retrovirology">
        <title>PDZ domain-binding motif of human T-cell leukemia virus type 1 Tax oncoprotein is essential for the interleukin 2 independent growth induction of a T-cell line.</title>
        <authorList>
            <person name="Tsubata C."/>
            <person name="Higuchi M."/>
            <person name="Takahashi M."/>
            <person name="Oie M."/>
            <person name="Tanaka Y."/>
            <person name="Gejyo F."/>
            <person name="Fujii M."/>
        </authorList>
    </citation>
    <scope>DOMAIN PDZ-BINDING</scope>
</reference>
<reference key="27">
    <citation type="journal article" date="2006" name="J. Virol.">
        <title>TORC1 and TORC2 coactivators are required for tax activation of the human T-cell leukemia virus type 1 long terminal repeats.</title>
        <authorList>
            <person name="Siu Y.-T."/>
            <person name="Chin K.-T."/>
            <person name="Siu K.-L."/>
            <person name="Yee Wai Choy E."/>
            <person name="Jeang K.-T."/>
            <person name="Jin D.-Y."/>
        </authorList>
    </citation>
    <scope>INTERACTION WITH HUMAN CRTC1; CRTC2 AND CRTC3</scope>
    <scope>FUNCTION</scope>
</reference>
<reference key="28">
    <citation type="journal article" date="2006" name="J. Virol.">
        <title>Coactivator-associated arginine methyltransferase 1 enhances transcriptional activity of the human T-cell lymphotropic virus type 1 long terminal repeat through direct interaction with Tax.</title>
        <authorList>
            <person name="Jeong S.J."/>
            <person name="Lu H."/>
            <person name="Cho W.K."/>
            <person name="Park H.U."/>
            <person name="Pise-Masison C."/>
            <person name="Brady J.N."/>
        </authorList>
    </citation>
    <scope>INTERACTION WITH HUMAN CARM1</scope>
</reference>
<reference key="29">
    <citation type="journal article" date="2006" name="J. Biol. Chem.">
        <title>Site-specific phosphorylation differentiates active from inactive forms of the HTLV-1 tax oncoprotein.</title>
        <authorList>
            <person name="Durkin S.S."/>
            <person name="Ward M.D."/>
            <person name="Fryrear K.A."/>
            <person name="Semmes O.J."/>
        </authorList>
    </citation>
    <scope>PHOSPHORYLATION AT THR-48; THR-184; THR-215 AND SER-336</scope>
    <scope>MUTAGENESIS OF THR-48; THR-184; THR-215; 300-SER-SER-301 AND SER-336</scope>
</reference>
<reference key="30">
    <citation type="journal article" date="2006" name="Retrovirology">
        <title>SUV39H1 interacts with HTLV-1 Tax and abrogates Tax transactivation of HTLV-1 LTR.</title>
        <authorList>
            <person name="Kamoi K."/>
            <person name="Yamamoto K."/>
            <person name="Misawa A."/>
            <person name="Miyake A."/>
            <person name="Ishida T."/>
            <person name="Tanaka Y."/>
            <person name="Mochizuki M."/>
            <person name="Watanabe T."/>
        </authorList>
    </citation>
    <scope>INTERACTION WITH HUMAN SUV39H1</scope>
</reference>
<reference key="31">
    <citation type="journal article" date="2012" name="Virology">
        <title>Human phospholipid scramblase 1 interacts with and regulates transactivation of HTLV-1 Tax.</title>
        <authorList>
            <person name="Kusano S."/>
            <person name="Eizuru Y."/>
        </authorList>
    </citation>
    <scope>FUNCTION</scope>
    <scope>SUBUNIT</scope>
    <scope>INTERACTION WITH HOST PLSCR1</scope>
    <scope>SUBCELLULAR LOCATION</scope>
</reference>
<reference key="32">
    <citation type="journal article" date="2016" name="PLoS Pathog.">
        <title>HTLV-1 Tax Functions as a Ubiquitin E3 Ligase for Direct IKK Activation via Synthesis of Mixed-Linkage Polyubiquitin Chains.</title>
        <authorList>
            <person name="Wang C."/>
            <person name="Long W."/>
            <person name="Peng C."/>
            <person name="Hu L."/>
            <person name="Zhang Q."/>
            <person name="Wu A."/>
            <person name="Zhang X."/>
            <person name="Duan X."/>
            <person name="Wong C.C."/>
            <person name="Tanaka Y."/>
            <person name="Xia Z."/>
        </authorList>
    </citation>
    <scope>FUNCTION</scope>
</reference>
<reference key="33">
    <citation type="journal article" date="2017" name="PLoS Pathog.">
        <title>HTLV-1 Tax Induces Formation of the Active Macromolecular IKK Complex by Generating Lys63- and Met1-Linked Hybrid Polyubiquitin Chains.</title>
        <authorList>
            <person name="Shibata Y."/>
            <person name="Tokunaga F."/>
            <person name="Goto E."/>
            <person name="Komatsu G."/>
            <person name="Gohda J."/>
            <person name="Saeki Y."/>
            <person name="Tanaka K."/>
            <person name="Takahashi H."/>
            <person name="Sawasaki T."/>
            <person name="Inoue S."/>
            <person name="Oshiumi H."/>
            <person name="Seya T."/>
            <person name="Nakano H."/>
            <person name="Tanaka Y."/>
            <person name="Iwai K."/>
            <person name="Inoue J.I."/>
        </authorList>
    </citation>
    <scope>FUNCTION</scope>
</reference>
<reference key="34">
    <citation type="journal article" date="2017" name="PLoS Pathog.">
        <title>Hijacking of the O-GlcNAcZYME complex by the HTLV-1 Tax oncoprotein facilitates viral transcription.</title>
        <authorList>
            <person name="Groussaud D."/>
            <person name="Khair M."/>
            <person name="Tollenaere A.I."/>
            <person name="Waast L."/>
            <person name="Kuo M.S."/>
            <person name="Mangeney M."/>
            <person name="Martella C."/>
            <person name="Fardini Y."/>
            <person name="Coste S."/>
            <person name="Souidi M."/>
            <person name="Benit L."/>
            <person name="Pique C."/>
            <person name="Issad T."/>
        </authorList>
    </citation>
    <scope>FUNCTION</scope>
    <scope>INTERACTION WITH HOST OGT AND OGA</scope>
</reference>
<reference key="35">
    <citation type="journal article" date="2018" name="Nat. Commun.">
        <title>HTLV-1 Tax plugs and freezes UPF1 helicase leading to nonsense-mediated mRNA decay inhibition.</title>
        <authorList>
            <person name="Fiorini F."/>
            <person name="Robin J.P."/>
            <person name="Kanaan J."/>
            <person name="Borowiak M."/>
            <person name="Croquette V."/>
            <person name="Le Hir H."/>
            <person name="Jalinot P."/>
            <person name="Mocquet V."/>
        </authorList>
    </citation>
    <scope>FUNCTION</scope>
    <scope>INTERACTION WITH HOST UPF1</scope>
</reference>
<reference key="36">
    <citation type="journal article" date="2018" name="Retrovirology">
        <title>The HTLV-1 oncoprotein Tax is modified by the ubiquitin related modifier 1 (Urm1).</title>
        <authorList>
            <person name="Hleihel R."/>
            <person name="Khoshnood B."/>
            <person name="Dacklin I."/>
            <person name="Omran H."/>
            <person name="Mouawad C."/>
            <person name="Dassouki Z."/>
            <person name="El-Sabban M."/>
            <person name="Shirinian M."/>
            <person name="Grabbe C."/>
            <person name="Bazarbachi A."/>
        </authorList>
    </citation>
    <scope>MODIFICATION BY URMYLATION</scope>
    <scope>SUBCELLULAR LOCATION</scope>
</reference>
<organism>
    <name type="scientific">Human T-cell leukemia virus 1 (strain Japan ATK-1 subtype A)</name>
    <name type="common">HTLV-1</name>
    <dbReference type="NCBI Taxonomy" id="11926"/>
    <lineage>
        <taxon>Viruses</taxon>
        <taxon>Riboviria</taxon>
        <taxon>Pararnavirae</taxon>
        <taxon>Artverviricota</taxon>
        <taxon>Revtraviricetes</taxon>
        <taxon>Ortervirales</taxon>
        <taxon>Retroviridae</taxon>
        <taxon>Orthoretrovirinae</taxon>
        <taxon>Deltaretrovirus</taxon>
        <taxon>Primate T-lymphotropic virus 1</taxon>
    </lineage>
</organism>
<protein>
    <recommendedName>
        <fullName>Protein Tax-1</fullName>
    </recommendedName>
    <alternativeName>
        <fullName>Protein X-LOR</fullName>
        <shortName>Protein PX</shortName>
    </alternativeName>
    <alternativeName>
        <fullName>Trans-activating transcriptional regulatory protein of HTLV-1</fullName>
    </alternativeName>
</protein>
<evidence type="ECO:0000255" key="1"/>
<evidence type="ECO:0000256" key="2">
    <source>
        <dbReference type="SAM" id="MobiDB-lite"/>
    </source>
</evidence>
<evidence type="ECO:0000269" key="3">
    <source>
    </source>
</evidence>
<evidence type="ECO:0000269" key="4">
    <source>
    </source>
</evidence>
<evidence type="ECO:0000269" key="5">
    <source>
    </source>
</evidence>
<evidence type="ECO:0000269" key="6">
    <source>
    </source>
</evidence>
<evidence type="ECO:0000269" key="7">
    <source>
    </source>
</evidence>
<evidence type="ECO:0000269" key="8">
    <source>
    </source>
</evidence>
<evidence type="ECO:0000269" key="9">
    <source>
    </source>
</evidence>
<evidence type="ECO:0000269" key="10">
    <source>
    </source>
</evidence>
<evidence type="ECO:0000269" key="11">
    <source>
    </source>
</evidence>
<evidence type="ECO:0000269" key="12">
    <source>
    </source>
</evidence>
<evidence type="ECO:0000269" key="13">
    <source>
    </source>
</evidence>
<evidence type="ECO:0000269" key="14">
    <source>
    </source>
</evidence>
<evidence type="ECO:0000269" key="15">
    <source>
    </source>
</evidence>
<evidence type="ECO:0000269" key="16">
    <source>
    </source>
</evidence>
<evidence type="ECO:0000269" key="17">
    <source>
    </source>
</evidence>
<evidence type="ECO:0000269" key="18">
    <source>
    </source>
</evidence>
<evidence type="ECO:0000269" key="19">
    <source>
    </source>
</evidence>
<evidence type="ECO:0000269" key="20">
    <source>
    </source>
</evidence>
<evidence type="ECO:0000269" key="21">
    <source>
    </source>
</evidence>
<evidence type="ECO:0000269" key="22">
    <source>
    </source>
</evidence>
<evidence type="ECO:0000269" key="23">
    <source>
    </source>
</evidence>
<evidence type="ECO:0000269" key="24">
    <source>
    </source>
</evidence>
<evidence type="ECO:0000269" key="25">
    <source>
    </source>
</evidence>
<evidence type="ECO:0000269" key="26">
    <source>
    </source>
</evidence>
<evidence type="ECO:0000269" key="27">
    <source>
    </source>
</evidence>
<evidence type="ECO:0000269" key="28">
    <source>
    </source>
</evidence>
<evidence type="ECO:0000269" key="29">
    <source>
    </source>
</evidence>
<evidence type="ECO:0000269" key="30">
    <source>
    </source>
</evidence>
<evidence type="ECO:0000305" key="31"/>
<evidence type="ECO:0007829" key="32">
    <source>
        <dbReference type="PDB" id="7P73"/>
    </source>
</evidence>
<name>TAX_HTL1A</name>
<dbReference type="EMBL" id="J02029">
    <property type="status" value="NOT_ANNOTATED_CDS"/>
    <property type="molecule type" value="Genomic_DNA"/>
</dbReference>
<dbReference type="PIR" id="A93954">
    <property type="entry name" value="TNLJH1"/>
</dbReference>
<dbReference type="PDB" id="7P73">
    <property type="method" value="X-ray"/>
    <property type="resolution" value="1.85 A"/>
    <property type="chains" value="B=344-353"/>
</dbReference>
<dbReference type="PDB" id="7PC3">
    <property type="method" value="X-ray"/>
    <property type="resolution" value="1.95 A"/>
    <property type="chains" value="C=344-353"/>
</dbReference>
<dbReference type="PDB" id="7PC4">
    <property type="method" value="X-ray"/>
    <property type="resolution" value="2.30 A"/>
    <property type="chains" value="C=344-353"/>
</dbReference>
<dbReference type="PDB" id="7PC9">
    <property type="method" value="X-ray"/>
    <property type="resolution" value="2.40 A"/>
    <property type="chains" value="C=344-353"/>
</dbReference>
<dbReference type="PDBsum" id="7P73"/>
<dbReference type="PDBsum" id="7PC3"/>
<dbReference type="PDBsum" id="7PC4"/>
<dbReference type="PDBsum" id="7PC9"/>
<dbReference type="SMR" id="P03409"/>
<dbReference type="ELM" id="P03409"/>
<dbReference type="IntAct" id="P03409">
    <property type="interactions" value="4"/>
</dbReference>
<dbReference type="MINT" id="P03409"/>
<dbReference type="BindingDB" id="P03409"/>
<dbReference type="iPTMnet" id="P03409"/>
<dbReference type="ABCD" id="P03409">
    <property type="antibodies" value="2 sequenced antibodies"/>
</dbReference>
<dbReference type="Proteomes" id="UP000007683">
    <property type="component" value="Segment"/>
</dbReference>
<dbReference type="GO" id="GO:0030430">
    <property type="term" value="C:host cell cytoplasm"/>
    <property type="evidence" value="ECO:0007669"/>
    <property type="project" value="UniProtKB-SubCell"/>
</dbReference>
<dbReference type="GO" id="GO:0042025">
    <property type="term" value="C:host cell nucleus"/>
    <property type="evidence" value="ECO:0007669"/>
    <property type="project" value="UniProtKB-SubCell"/>
</dbReference>
<dbReference type="GO" id="GO:0003677">
    <property type="term" value="F:DNA binding"/>
    <property type="evidence" value="ECO:0007669"/>
    <property type="project" value="UniProtKB-KW"/>
</dbReference>
<dbReference type="GO" id="GO:0017124">
    <property type="term" value="F:SH3 domain binding"/>
    <property type="evidence" value="ECO:0007669"/>
    <property type="project" value="UniProtKB-KW"/>
</dbReference>
<dbReference type="GO" id="GO:0008270">
    <property type="term" value="F:zinc ion binding"/>
    <property type="evidence" value="ECO:0007669"/>
    <property type="project" value="UniProtKB-KW"/>
</dbReference>
<dbReference type="GO" id="GO:0045893">
    <property type="term" value="P:positive regulation of DNA-templated transcription"/>
    <property type="evidence" value="ECO:0007669"/>
    <property type="project" value="InterPro"/>
</dbReference>
<dbReference type="GO" id="GO:0085033">
    <property type="term" value="P:symbiont-mediated activation of host NF-kappaB cascade"/>
    <property type="evidence" value="ECO:0007669"/>
    <property type="project" value="UniProtKB-KW"/>
</dbReference>
<dbReference type="GO" id="GO:0039646">
    <property type="term" value="P:symbiont-mediated perturbation of host cell cycle G0/G1 transition checkpoint"/>
    <property type="evidence" value="ECO:0007669"/>
    <property type="project" value="UniProtKB-KW"/>
</dbReference>
<dbReference type="GO" id="GO:0039645">
    <property type="term" value="P:symbiont-mediated perturbation of host cell cycle G1/S transition checkpoint"/>
    <property type="evidence" value="ECO:0007669"/>
    <property type="project" value="UniProtKB-KW"/>
</dbReference>
<dbReference type="GO" id="GO:0039593">
    <property type="term" value="P:symbiont-mediated perturbation of host exit from mitosis"/>
    <property type="evidence" value="ECO:0007669"/>
    <property type="project" value="UniProtKB-KW"/>
</dbReference>
<dbReference type="InterPro" id="IPR004120">
    <property type="entry name" value="Tax"/>
</dbReference>
<dbReference type="Pfam" id="PF02959">
    <property type="entry name" value="Tax"/>
    <property type="match status" value="1"/>
</dbReference>
<sequence length="353" mass="39471">MAHFPGFGQSLLFGYPVYVFGDCVQGDWCPISGGLCSARLHRHALLATCPEHQITWDPIDGRVIGSALQFLIPRLPSFPTQRTSKTLKVLTPPITHTTPNIPPSFLQAMRKYSPFRNGYMEPTLGQHLPTLSFPDPGLRPQNLYTLWGGSVVCMYLYQLSPPITWPLLPHVIFCHPGQLGAFLTNVPYKRIEELLYKISLTTGALIILPEDCLPTTLFQPARAPVTLTAWQNGLLPFHSTLTTPGLIWTFTDGTPMISGPCPKDGQPSLVLQSSSFIFHKFQTKAYHPSFLLSHGLIQYSSFHSLHLLFEEYTNIPISLLFNEKEADDNDHEPQISPGGLEPPSEKHFRETEV</sequence>
<keyword id="KW-0002">3D-structure</keyword>
<keyword id="KW-1074">Activation of host NF-kappa-B by virus</keyword>
<keyword id="KW-0010">Activator</keyword>
<keyword id="KW-0238">DNA-binding</keyword>
<keyword id="KW-1077">G0/G1 host cell cycle checkpoint dysregulation by virus</keyword>
<keyword id="KW-1078">G1/S host cell cycle checkpoint dysregulation by virus</keyword>
<keyword id="KW-1035">Host cytoplasm</keyword>
<keyword id="KW-1048">Host nucleus</keyword>
<keyword id="KW-0945">Host-virus interaction</keyword>
<keyword id="KW-1098">Inhibition of host mitotic exit by virus</keyword>
<keyword id="KW-0479">Metal-binding</keyword>
<keyword id="KW-1121">Modulation of host cell cycle by virus</keyword>
<keyword id="KW-0553">Oncogene</keyword>
<keyword id="KW-0597">Phosphoprotein</keyword>
<keyword id="KW-1185">Reference proteome</keyword>
<keyword id="KW-0729">SH3-binding</keyword>
<keyword id="KW-0804">Transcription</keyword>
<keyword id="KW-0805">Transcription regulation</keyword>
<keyword id="KW-0862">Zinc</keyword>
<keyword id="KW-0863">Zinc-finger</keyword>